<comment type="function">
    <text evidence="4 6 7 8 9 11 12">Regulates the expression of transcription factors that define the cell fates. Acts in a non-cell-autonomous fashion, functions in a radial inside-out signaling process, and mediates cell morphogenesis and cell fate across clonally distinct cell layers in floral primordia, developing ovules, and root meristems. Seems to be required for the regulation of cell shape and the orientation of the mitotic division plane. Involved in root hair specification, in the formation of the outer integument and the shape of organs such as carpels and petals and is necessary for the shape and height of the stem. Non-functional SUB proteins are retained in the endoplasmic reticulum and degraded by endoplasmic reticulum-associated degradation (ERAD). Collaboratively with QKY and POQ, regulates cell growth anisotropy during gynoecium development, thus linking together cell-cell communication and cellular growth (PubMed:24173806). Together with QKY, links RLK-dependent signal transduction and intercellular communication mediated by plasmodesmata (PD) to regulate tissue morphogenesis (PubMed:25256344).</text>
</comment>
<comment type="activity regulation">
    <text evidence="8">Regulated at the post-transcriptional level.</text>
</comment>
<comment type="subunit">
    <text evidence="10 11 12">Interacts (via intra-cellular domain) with AN; this interaction is not required for correct subcellular localization and recycling of SUB (PubMed:23368817). Binds to QKY and POQ at the plasma membrane (PubMed:24173806). Binds to QKY at plasmodesmata (PD) in root epidermal cells to promote tissue morphogenesis (PubMed:25256344).</text>
</comment>
<comment type="interaction">
    <interactant intactId="EBI-17072125">
        <id>Q8RWZ1</id>
    </interactant>
    <interactant intactId="EBI-1238687">
        <id>O04567</id>
        <label>At1g27190</label>
    </interactant>
    <organismsDiffer>false</organismsDiffer>
    <experiments>2</experiments>
</comment>
<comment type="interaction">
    <interactant intactId="EBI-17072125">
        <id>Q8RWZ1</id>
    </interactant>
    <interactant intactId="EBI-20651225">
        <id>C0LGI5</id>
        <label>At1g69990</label>
    </interactant>
    <organismsDiffer>false</organismsDiffer>
    <experiments>3</experiments>
</comment>
<comment type="interaction">
    <interactant intactId="EBI-17072125">
        <id>Q8RWZ1</id>
    </interactant>
    <interactant intactId="EBI-20651957">
        <id>Q9ZQR3</id>
        <label>At2g14510</label>
    </interactant>
    <organismsDiffer>false</organismsDiffer>
    <experiments>2</experiments>
</comment>
<comment type="interaction">
    <interactant intactId="EBI-17072125">
        <id>Q8RWZ1</id>
    </interactant>
    <interactant intactId="EBI-16902452">
        <id>Q8VYT3</id>
        <label>At4g30520</label>
    </interactant>
    <organismsDiffer>false</organismsDiffer>
    <experiments>2</experiments>
</comment>
<comment type="interaction">
    <interactant intactId="EBI-17072125">
        <id>Q8RWZ1</id>
    </interactant>
    <interactant intactId="EBI-6298290">
        <id>Q9ASS4</id>
        <label>At5g48380</label>
    </interactant>
    <organismsDiffer>false</organismsDiffer>
    <experiments>2</experiments>
</comment>
<comment type="interaction">
    <interactant intactId="EBI-17072125">
        <id>Q8RWZ1</id>
    </interactant>
    <interactant intactId="EBI-617138">
        <id>Q94F62</id>
        <label>BAK1</label>
    </interactant>
    <organismsDiffer>false</organismsDiffer>
    <experiments>4</experiments>
</comment>
<comment type="interaction">
    <interactant intactId="EBI-17072125">
        <id>Q8RWZ1</id>
    </interactant>
    <interactant intactId="EBI-1797828">
        <id>O22476</id>
        <label>BRI1</label>
    </interactant>
    <organismsDiffer>false</organismsDiffer>
    <experiments>2</experiments>
</comment>
<comment type="interaction">
    <interactant intactId="EBI-17072125">
        <id>Q8RWZ1</id>
    </interactant>
    <interactant intactId="EBI-590903">
        <id>Q9ZWC8</id>
        <label>BRL1</label>
    </interactant>
    <organismsDiffer>false</organismsDiffer>
    <experiments>2</experiments>
</comment>
<comment type="interaction">
    <interactant intactId="EBI-17072125">
        <id>Q8RWZ1</id>
    </interactant>
    <interactant intactId="EBI-16940407">
        <id>Q42371</id>
        <label>ERECTA</label>
    </interactant>
    <organismsDiffer>false</organismsDiffer>
    <experiments>3</experiments>
</comment>
<comment type="interaction">
    <interactant intactId="EBI-17072125">
        <id>Q8RWZ1</id>
    </interactant>
    <interactant intactId="EBI-16914248">
        <id>C0LGW6</id>
        <label>ERL1</label>
    </interactant>
    <organismsDiffer>false</organismsDiffer>
    <experiments>4</experiments>
</comment>
<comment type="interaction">
    <interactant intactId="EBI-17072125">
        <id>Q8RWZ1</id>
    </interactant>
    <interactant intactId="EBI-16895926">
        <id>Q6XAT2</id>
        <label>ERL2</label>
    </interactant>
    <organismsDiffer>false</organismsDiffer>
    <experiments>4</experiments>
</comment>
<comment type="interaction">
    <interactant intactId="EBI-17072125">
        <id>Q8RWZ1</id>
    </interactant>
    <interactant intactId="EBI-16924837">
        <id>Q9C8I6</id>
        <label>IOS1</label>
    </interactant>
    <organismsDiffer>false</organismsDiffer>
    <experiments>3</experiments>
</comment>
<comment type="interaction">
    <interactant intactId="EBI-17072125">
        <id>Q8RWZ1</id>
    </interactant>
    <interactant intactId="EBI-20651739">
        <id>Q9ZVD4</id>
        <label>LRR-RLK</label>
    </interactant>
    <organismsDiffer>false</organismsDiffer>
    <experiments>2</experiments>
</comment>
<comment type="interaction">
    <interactant intactId="EBI-17072125">
        <id>Q8RWZ1</id>
    </interactant>
    <interactant intactId="EBI-16904988">
        <id>Q9C7S5</id>
        <label>PSY1R</label>
    </interactant>
    <organismsDiffer>false</organismsDiffer>
    <experiments>2</experiments>
</comment>
<comment type="interaction">
    <interactant intactId="EBI-17072125">
        <id>Q8RWZ1</id>
    </interactant>
    <interactant intactId="EBI-1238953">
        <id>Q9ZRF9</id>
        <label>RPK1</label>
    </interactant>
    <organismsDiffer>false</organismsDiffer>
    <experiments>2</experiments>
</comment>
<comment type="interaction">
    <interactant intactId="EBI-17072125">
        <id>Q8RWZ1</id>
    </interactant>
    <interactant intactId="EBI-1555537">
        <id>Q94AG2</id>
        <label>SERK1</label>
    </interactant>
    <organismsDiffer>false</organismsDiffer>
    <experiments>4</experiments>
</comment>
<comment type="interaction">
    <interactant intactId="EBI-17072125">
        <id>Q8RWZ1</id>
    </interactant>
    <interactant intactId="EBI-6290483">
        <id>Q9SKG5</id>
        <label>SERK4</label>
    </interactant>
    <organismsDiffer>false</organismsDiffer>
    <experiments>4</experiments>
</comment>
<comment type="interaction">
    <interactant intactId="EBI-17072125">
        <id>Q8RWZ1</id>
    </interactant>
    <interactant intactId="EBI-20651925">
        <id>Q6R2K3</id>
        <label>SRF3</label>
    </interactant>
    <organismsDiffer>false</organismsDiffer>
    <experiments>2</experiments>
</comment>
<comment type="interaction">
    <interactant intactId="EBI-17072125">
        <id>Q8RWZ1</id>
    </interactant>
    <interactant intactId="EBI-20651875">
        <id>Q6R2K1</id>
        <label>SRF5</label>
    </interactant>
    <organismsDiffer>false</organismsDiffer>
    <experiments>2</experiments>
</comment>
<comment type="interaction">
    <interactant intactId="EBI-17072125">
        <id>Q8RWZ1</id>
    </interactant>
    <interactant intactId="EBI-16954301">
        <id>Q9C8M9</id>
        <label>SRF6</label>
    </interactant>
    <organismsDiffer>false</organismsDiffer>
    <experiments>2</experiments>
</comment>
<comment type="interaction">
    <interactant intactId="EBI-17072125">
        <id>Q8RWZ1</id>
    </interactant>
    <interactant intactId="EBI-17072125">
        <id>Q8RWZ1</id>
        <label>SUB</label>
    </interactant>
    <organismsDiffer>false</organismsDiffer>
    <experiments>2</experiments>
</comment>
<comment type="subcellular location">
    <subcellularLocation>
        <location evidence="12">Cell membrane</location>
        <topology evidence="15">Single-pass membrane protein</topology>
    </subcellularLocation>
    <subcellularLocation>
        <location evidence="12">Cell junction</location>
        <location evidence="12">Plasmodesma</location>
    </subcellularLocation>
</comment>
<comment type="tissue specificity">
    <text evidence="4 5">Expressed in leaves, stems, inflorescences, flower buds and developing root epidermis.</text>
</comment>
<comment type="developmental stage">
    <text evidence="7">Required for epidermal patterning during postembryonic root development, but not involved in hypocotyl development.</text>
</comment>
<comment type="domain">
    <text>The protein kinase domain is catalytically inactive, but nevertheless important for SUB function.</text>
</comment>
<comment type="disruption phenotype">
    <text evidence="11">Alterated pistil morphogenesis, such as twisting of the gynoecium (PubMed:24173806). Double mutants sub/scm poq and qky sub/scm have a stronger pistil twisting than single mutants (PubMed:24173806). The triple mutant qky sub/scm poq has a dramatic pistil twisting phenotype due to defects of valve cell growth anisotropy (PubMed:24173806).</text>
</comment>
<comment type="miscellaneous">
    <text>Cannot be functionally replaced by the SRF1 to SRF8 proteins.</text>
</comment>
<comment type="miscellaneous">
    <text>The sub/scm phenotype is sensitive to ecotype and is greatly reduced in cv. Columbia background.</text>
</comment>
<comment type="miscellaneous">
    <text evidence="16">Phosphorylation of Thr-486, Thr-494 or Ser-656 is not required for SUB function.</text>
</comment>
<comment type="similarity">
    <text evidence="2">Belongs to the protein kinase superfamily. Ser/Thr protein kinase family.</text>
</comment>
<comment type="sequence caution" evidence="15">
    <conflict type="erroneous gene model prediction">
        <sequence resource="EMBL-CDS" id="AAB65472"/>
    </conflict>
</comment>
<comment type="sequence caution" evidence="15">
    <conflict type="erroneous initiation">
        <sequence resource="EMBL-CDS" id="AAD50000"/>
    </conflict>
    <text>Truncated N-terminus.</text>
</comment>
<sequence>MSFTRWEVFFGLSVLALTMPFSAGVTNLRDVSAINNLYITLGAPSLHHWLAFGGDPCGEKWQGVVCDSSNITEIRIPGMKVGGGLSDTLADFSSIQVMDFSSNHISGTIPQALPSSIRNLSLSSNRFTGNIPFTLSFLSDLSELSLGSNLLSGEIPDYFQQLSKLTKLDLSSNILEGHLPSSMGDLASLKILYLQDNKLTGTLDVIEDLFLTDLNVENNLFSGPIPPNLLKIPNFKKDGTPFNTSIITPPPPPVVDPPPATHRAPPVPRIPPVSGVPPAPFAPFAPLQPQQHPPPSPPLVWSPPSSDNGGGDPWNSVSGQPTLQISPPSGSGSGKFWSTQRIILVVSSVAIIVLVSGLCVTLWRCCRSKIYNRYYSGARKDLQRPYFNKPPSQPTPTMGKVSREPMVKPFDGYGAGDRKYGYPMPQRAEESRRAMPPTSYYNKDVNTPQKPLQQPPRQFQSNDTASKRAAHFPPGLNSSSSATVFTIASLQQYTNNFSEENIIGEGSIGNVYRAELRHGKFLAVKKLSNTINRTQSDGEFLNLVSNVLKLKRGHILELLGYCNEFGQRLLVYEYCPNGSLQDALHLDRKLHKKLTWNVRINIALGASKALQFLHEVCQPPVVHQNFKSSKVLLDGKLSVRVADSGLAYMLPPRPTSQMAGYAAPEVEYGSYTCQSDVFSLGVVMLELLTGRRPFDRTRPRGHQTLAQWAIPRLHDIDALTRMVDPSLHGAYPMKSLSRFADIISRSLQMEPGFRPPISEIVQDLQHMI</sequence>
<dbReference type="EMBL" id="AF399923">
    <property type="protein sequence ID" value="AAQ03031.1"/>
    <property type="molecule type" value="mRNA"/>
</dbReference>
<dbReference type="EMBL" id="AC007259">
    <property type="protein sequence ID" value="AAD50000.1"/>
    <property type="status" value="ALT_INIT"/>
    <property type="molecule type" value="Genomic_DNA"/>
</dbReference>
<dbReference type="EMBL" id="U95973">
    <property type="protein sequence ID" value="AAB65472.1"/>
    <property type="status" value="ALT_SEQ"/>
    <property type="molecule type" value="Genomic_DNA"/>
</dbReference>
<dbReference type="EMBL" id="CP002684">
    <property type="protein sequence ID" value="AEE28690.1"/>
    <property type="molecule type" value="Genomic_DNA"/>
</dbReference>
<dbReference type="EMBL" id="AY091019">
    <property type="protein sequence ID" value="AAM14041.1"/>
    <property type="molecule type" value="mRNA"/>
</dbReference>
<dbReference type="EMBL" id="AY117318">
    <property type="protein sequence ID" value="AAM51393.1"/>
    <property type="molecule type" value="mRNA"/>
</dbReference>
<dbReference type="EMBL" id="AK227100">
    <property type="protein sequence ID" value="BAE99152.1"/>
    <property type="molecule type" value="mRNA"/>
</dbReference>
<dbReference type="PIR" id="D86245">
    <property type="entry name" value="D86245"/>
</dbReference>
<dbReference type="RefSeq" id="NP_172580.2">
    <property type="nucleotide sequence ID" value="NM_100986.4"/>
</dbReference>
<dbReference type="SMR" id="Q8RWZ1"/>
<dbReference type="BioGRID" id="22894">
    <property type="interactions" value="33"/>
</dbReference>
<dbReference type="FunCoup" id="Q8RWZ1">
    <property type="interactions" value="56"/>
</dbReference>
<dbReference type="IntAct" id="Q8RWZ1">
    <property type="interactions" value="32"/>
</dbReference>
<dbReference type="STRING" id="3702.Q8RWZ1"/>
<dbReference type="GlyCosmos" id="Q8RWZ1">
    <property type="glycosylation" value="3 sites, No reported glycans"/>
</dbReference>
<dbReference type="GlyGen" id="Q8RWZ1">
    <property type="glycosylation" value="5 sites"/>
</dbReference>
<dbReference type="iPTMnet" id="Q8RWZ1"/>
<dbReference type="PaxDb" id="3702-AT1G11130.1"/>
<dbReference type="ProteomicsDB" id="245352"/>
<dbReference type="EnsemblPlants" id="AT1G11130.1">
    <property type="protein sequence ID" value="AT1G11130.1"/>
    <property type="gene ID" value="AT1G11130"/>
</dbReference>
<dbReference type="GeneID" id="837654"/>
<dbReference type="Gramene" id="AT1G11130.1">
    <property type="protein sequence ID" value="AT1G11130.1"/>
    <property type="gene ID" value="AT1G11130"/>
</dbReference>
<dbReference type="KEGG" id="ath:AT1G11130"/>
<dbReference type="Araport" id="AT1G11130"/>
<dbReference type="TAIR" id="AT1G11130">
    <property type="gene designation" value="SUB"/>
</dbReference>
<dbReference type="eggNOG" id="KOG1187">
    <property type="taxonomic scope" value="Eukaryota"/>
</dbReference>
<dbReference type="HOGENOM" id="CLU_000288_92_2_1"/>
<dbReference type="InParanoid" id="Q8RWZ1"/>
<dbReference type="OMA" id="VFPHGKY"/>
<dbReference type="OrthoDB" id="676979at2759"/>
<dbReference type="PhylomeDB" id="Q8RWZ1"/>
<dbReference type="PRO" id="PR:Q8RWZ1"/>
<dbReference type="Proteomes" id="UP000006548">
    <property type="component" value="Chromosome 1"/>
</dbReference>
<dbReference type="ExpressionAtlas" id="Q8RWZ1">
    <property type="expression patterns" value="baseline and differential"/>
</dbReference>
<dbReference type="GO" id="GO:0005886">
    <property type="term" value="C:plasma membrane"/>
    <property type="evidence" value="ECO:0000314"/>
    <property type="project" value="UniProtKB"/>
</dbReference>
<dbReference type="GO" id="GO:0009506">
    <property type="term" value="C:plasmodesma"/>
    <property type="evidence" value="ECO:0000314"/>
    <property type="project" value="UniProtKB"/>
</dbReference>
<dbReference type="GO" id="GO:0005524">
    <property type="term" value="F:ATP binding"/>
    <property type="evidence" value="ECO:0007669"/>
    <property type="project" value="UniProtKB-KW"/>
</dbReference>
<dbReference type="GO" id="GO:0042802">
    <property type="term" value="F:identical protein binding"/>
    <property type="evidence" value="ECO:0000353"/>
    <property type="project" value="IntAct"/>
</dbReference>
<dbReference type="GO" id="GO:0004672">
    <property type="term" value="F:protein kinase activity"/>
    <property type="evidence" value="ECO:0007669"/>
    <property type="project" value="InterPro"/>
</dbReference>
<dbReference type="GO" id="GO:0000902">
    <property type="term" value="P:cell morphogenesis"/>
    <property type="evidence" value="ECO:0000315"/>
    <property type="project" value="TAIR"/>
</dbReference>
<dbReference type="GO" id="GO:0048437">
    <property type="term" value="P:floral organ development"/>
    <property type="evidence" value="ECO:0000315"/>
    <property type="project" value="TAIR"/>
</dbReference>
<dbReference type="GO" id="GO:0048366">
    <property type="term" value="P:leaf development"/>
    <property type="evidence" value="ECO:0000315"/>
    <property type="project" value="TAIR"/>
</dbReference>
<dbReference type="GO" id="GO:0010305">
    <property type="term" value="P:leaf vascular tissue pattern formation"/>
    <property type="evidence" value="ECO:0000315"/>
    <property type="project" value="TAIR"/>
</dbReference>
<dbReference type="GO" id="GO:0048481">
    <property type="term" value="P:plant ovule development"/>
    <property type="evidence" value="ECO:0000315"/>
    <property type="project" value="TAIR"/>
</dbReference>
<dbReference type="GO" id="GO:0010497">
    <property type="term" value="P:plasmodesmata-mediated intercellular transport"/>
    <property type="evidence" value="ECO:0000315"/>
    <property type="project" value="UniProtKB"/>
</dbReference>
<dbReference type="GO" id="GO:0010059">
    <property type="term" value="P:positive regulation of atrichoblast fate specification"/>
    <property type="evidence" value="ECO:0000315"/>
    <property type="project" value="TAIR"/>
</dbReference>
<dbReference type="GO" id="GO:0010063">
    <property type="term" value="P:positive regulation of trichoblast fate specification"/>
    <property type="evidence" value="ECO:0000315"/>
    <property type="project" value="TAIR"/>
</dbReference>
<dbReference type="GO" id="GO:0042127">
    <property type="term" value="P:regulation of cell population proliferation"/>
    <property type="evidence" value="ECO:0000315"/>
    <property type="project" value="TAIR"/>
</dbReference>
<dbReference type="GO" id="GO:0010071">
    <property type="term" value="P:root meristem specification"/>
    <property type="evidence" value="ECO:0000315"/>
    <property type="project" value="TAIR"/>
</dbReference>
<dbReference type="GO" id="GO:0048367">
    <property type="term" value="P:shoot system development"/>
    <property type="evidence" value="ECO:0000304"/>
    <property type="project" value="TAIR"/>
</dbReference>
<dbReference type="GO" id="GO:0048729">
    <property type="term" value="P:tissue morphogenesis"/>
    <property type="evidence" value="ECO:0000315"/>
    <property type="project" value="UniProtKB"/>
</dbReference>
<dbReference type="FunFam" id="3.80.10.10:FF:000062">
    <property type="entry name" value="protein STRUBBELIG-RECEPTOR FAMILY 3"/>
    <property type="match status" value="1"/>
</dbReference>
<dbReference type="FunFam" id="3.30.200.20:FF:000125">
    <property type="entry name" value="Protein STRUBBELIG-RECEPTOR FAMILY 8"/>
    <property type="match status" value="1"/>
</dbReference>
<dbReference type="FunFam" id="1.10.510.10:FF:000095">
    <property type="entry name" value="protein STRUBBELIG-RECEPTOR FAMILY 8"/>
    <property type="match status" value="1"/>
</dbReference>
<dbReference type="Gene3D" id="3.30.200.20">
    <property type="entry name" value="Phosphorylase Kinase, domain 1"/>
    <property type="match status" value="1"/>
</dbReference>
<dbReference type="Gene3D" id="3.80.10.10">
    <property type="entry name" value="Ribonuclease Inhibitor"/>
    <property type="match status" value="2"/>
</dbReference>
<dbReference type="Gene3D" id="1.10.510.10">
    <property type="entry name" value="Transferase(Phosphotransferase) domain 1"/>
    <property type="match status" value="1"/>
</dbReference>
<dbReference type="InterPro" id="IPR011009">
    <property type="entry name" value="Kinase-like_dom_sf"/>
</dbReference>
<dbReference type="InterPro" id="IPR001611">
    <property type="entry name" value="Leu-rich_rpt"/>
</dbReference>
<dbReference type="InterPro" id="IPR032675">
    <property type="entry name" value="LRR_dom_sf"/>
</dbReference>
<dbReference type="InterPro" id="IPR046959">
    <property type="entry name" value="PRK1-6/SRF4-like"/>
</dbReference>
<dbReference type="InterPro" id="IPR000719">
    <property type="entry name" value="Prot_kinase_dom"/>
</dbReference>
<dbReference type="PANTHER" id="PTHR48007">
    <property type="entry name" value="LEUCINE-RICH REPEAT RECEPTOR-LIKE PROTEIN KINASE PXC1"/>
    <property type="match status" value="1"/>
</dbReference>
<dbReference type="PANTHER" id="PTHR48007:SF68">
    <property type="entry name" value="PROTEIN KINASE DOMAIN-CONTAINING PROTEIN"/>
    <property type="match status" value="1"/>
</dbReference>
<dbReference type="Pfam" id="PF00560">
    <property type="entry name" value="LRR_1"/>
    <property type="match status" value="1"/>
</dbReference>
<dbReference type="Pfam" id="PF13855">
    <property type="entry name" value="LRR_8"/>
    <property type="match status" value="1"/>
</dbReference>
<dbReference type="Pfam" id="PF00069">
    <property type="entry name" value="Pkinase"/>
    <property type="match status" value="1"/>
</dbReference>
<dbReference type="SUPFAM" id="SSF52058">
    <property type="entry name" value="L domain-like"/>
    <property type="match status" value="1"/>
</dbReference>
<dbReference type="SUPFAM" id="SSF56112">
    <property type="entry name" value="Protein kinase-like (PK-like)"/>
    <property type="match status" value="1"/>
</dbReference>
<dbReference type="PROSITE" id="PS50011">
    <property type="entry name" value="PROTEIN_KINASE_DOM"/>
    <property type="match status" value="1"/>
</dbReference>
<gene>
    <name evidence="13" type="primary">SUB</name>
    <name evidence="14" type="synonym">SCM</name>
    <name evidence="17" type="ordered locus">At1g11130</name>
    <name evidence="18" type="ORF">T19D16.1</name>
    <name evidence="18" type="ORF">T19D16.8</name>
    <name evidence="19" type="ORF">T28P6.18</name>
</gene>
<feature type="signal peptide" evidence="1">
    <location>
        <begin position="1"/>
        <end position="24"/>
    </location>
</feature>
<feature type="chain" id="PRO_0000311840" description="Protein STRUBBELIG">
    <location>
        <begin position="25"/>
        <end position="768"/>
    </location>
</feature>
<feature type="topological domain" description="Extracellular" evidence="1">
    <location>
        <begin position="25"/>
        <end position="341"/>
    </location>
</feature>
<feature type="transmembrane region" description="Helical" evidence="1">
    <location>
        <begin position="342"/>
        <end position="362"/>
    </location>
</feature>
<feature type="topological domain" description="Cytoplasmic" evidence="1">
    <location>
        <begin position="363"/>
        <end position="768"/>
    </location>
</feature>
<feature type="repeat" description="LRR 1">
    <location>
        <begin position="94"/>
        <end position="115"/>
    </location>
</feature>
<feature type="repeat" description="LRR 2">
    <location>
        <begin position="116"/>
        <end position="139"/>
    </location>
</feature>
<feature type="repeat" description="LRR 3">
    <location>
        <begin position="140"/>
        <end position="162"/>
    </location>
</feature>
<feature type="repeat" description="LRR 4">
    <location>
        <begin position="164"/>
        <end position="186"/>
    </location>
</feature>
<feature type="repeat" description="LRR 5">
    <location>
        <begin position="188"/>
        <end position="210"/>
    </location>
</feature>
<feature type="repeat" description="LRR 6">
    <location>
        <begin position="211"/>
        <end position="231"/>
    </location>
</feature>
<feature type="domain" description="Protein kinase" evidence="2">
    <location>
        <begin position="497"/>
        <end position="768"/>
    </location>
</feature>
<feature type="region of interest" description="Disordered" evidence="3">
    <location>
        <begin position="241"/>
        <end position="334"/>
    </location>
</feature>
<feature type="region of interest" description="Disordered" evidence="3">
    <location>
        <begin position="385"/>
        <end position="477"/>
    </location>
</feature>
<feature type="compositionally biased region" description="Pro residues" evidence="3">
    <location>
        <begin position="248"/>
        <end position="283"/>
    </location>
</feature>
<feature type="compositionally biased region" description="Pro residues" evidence="3">
    <location>
        <begin position="291"/>
        <end position="301"/>
    </location>
</feature>
<feature type="compositionally biased region" description="Polar residues" evidence="3">
    <location>
        <begin position="315"/>
        <end position="334"/>
    </location>
</feature>
<feature type="compositionally biased region" description="Polar residues" evidence="3">
    <location>
        <begin position="439"/>
        <end position="464"/>
    </location>
</feature>
<feature type="binding site" evidence="2">
    <location>
        <begin position="503"/>
        <end position="511"/>
    </location>
    <ligand>
        <name>ATP</name>
        <dbReference type="ChEBI" id="CHEBI:30616"/>
    </ligand>
</feature>
<feature type="binding site" evidence="2">
    <location>
        <position position="525"/>
    </location>
    <ligand>
        <name>ATP</name>
        <dbReference type="ChEBI" id="CHEBI:30616"/>
    </ligand>
</feature>
<feature type="glycosylation site" description="N-linked (GlcNAc...) asparagine" evidence="1">
    <location>
        <position position="70"/>
    </location>
</feature>
<feature type="glycosylation site" description="N-linked (GlcNAc...) asparagine" evidence="1">
    <location>
        <position position="119"/>
    </location>
</feature>
<feature type="glycosylation site" description="N-linked (GlcNAc...) asparagine" evidence="1">
    <location>
        <position position="243"/>
    </location>
</feature>
<feature type="disulfide bond" evidence="16">
    <location>
        <begin position="57"/>
        <end position="66"/>
    </location>
</feature>
<feature type="mutagenesis site" description="In sub-10; loss of function. Loss of function; when associated with Y-66." evidence="9">
    <original>C</original>
    <variation>Y</variation>
    <location>
        <position position="57"/>
    </location>
</feature>
<feature type="mutagenesis site" description="In sub-3; loss of function." evidence="5 9">
    <original>V</original>
    <variation>M</variation>
    <location>
        <position position="64"/>
    </location>
</feature>
<feature type="mutagenesis site" description="Loss of function. Loss of function; when associated with Y-57." evidence="9">
    <original>C</original>
    <variation>Y</variation>
    <location>
        <position position="66"/>
    </location>
</feature>
<feature type="mutagenesis site" description="In sub-11; no phenotypic effect." evidence="9">
    <original>S</original>
    <variation>L</variation>
    <location>
        <position position="69"/>
    </location>
</feature>
<feature type="mutagenesis site" description="In sub-12; no phenotypic effect." evidence="9">
    <original>S</original>
    <variation>L</variation>
    <location>
        <position position="222"/>
    </location>
</feature>
<feature type="mutagenesis site" description="In sub-13; no phenotypic effect." evidence="9">
    <original>P</original>
    <variation>L</variation>
    <location>
        <position position="258"/>
    </location>
</feature>
<feature type="mutagenesis site" description="In sub-14; no phenotypic effect." evidence="9">
    <original>P</original>
    <variation>S</variation>
    <location>
        <position position="272"/>
    </location>
</feature>
<feature type="mutagenesis site" description="In sub-5; loss of function." evidence="5">
    <location>
        <begin position="288"/>
        <end position="768"/>
    </location>
</feature>
<feature type="mutagenesis site" description="In sub-15; loss of function." evidence="9">
    <original>P</original>
    <variation>L</variation>
    <location>
        <position position="304"/>
    </location>
</feature>
<feature type="mutagenesis site" description="In scm-1; loss of function." evidence="4">
    <location>
        <begin position="324"/>
        <end position="768"/>
    </location>
</feature>
<feature type="mutagenesis site" description="In sub-2; loss of function." evidence="5">
    <location>
        <begin position="337"/>
        <end position="768"/>
    </location>
</feature>
<feature type="mutagenesis site" description="In sub-16; no phenotypic effect." evidence="9">
    <original>G</original>
    <variation>S</variation>
    <location>
        <position position="357"/>
    </location>
</feature>
<feature type="mutagenesis site" description="In sub-17; no phenotypic effect." evidence="9">
    <original>S</original>
    <variation>L</variation>
    <location>
        <position position="466"/>
    </location>
</feature>
<feature type="mutagenesis site" description="In sub-18; no phenotypic effect." evidence="9">
    <original>P</original>
    <variation>L</variation>
    <location>
        <position position="473"/>
    </location>
</feature>
<feature type="mutagenesis site" description="No phenotypic effect." evidence="5">
    <original>G</original>
    <variation>A</variation>
    <location>
        <position position="506"/>
    </location>
</feature>
<feature type="mutagenesis site" description="No phenotypic effect." evidence="5">
    <original>K</original>
    <variation>E</variation>
    <location>
        <position position="525"/>
    </location>
</feature>
<feature type="mutagenesis site" description="No phenotypic effect." evidence="5">
    <original>E</original>
    <variation>A</variation>
    <location>
        <position position="539"/>
    </location>
</feature>
<feature type="mutagenesis site" description="In sub-19; loss of function." evidence="9">
    <original>S</original>
    <variation>F</variation>
    <location>
        <position position="545"/>
    </location>
</feature>
<feature type="mutagenesis site" description="In sub-4; loss of function." evidence="5 9">
    <original>R</original>
    <variation>C</variation>
    <location>
        <position position="599"/>
    </location>
</feature>
<feature type="mutagenesis site" description="In sub-20; no phenotypic effect." evidence="9">
    <original>L</original>
    <variation>F</variation>
    <location>
        <position position="633"/>
    </location>
</feature>
<keyword id="KW-0067">ATP-binding</keyword>
<keyword id="KW-0965">Cell junction</keyword>
<keyword id="KW-1003">Cell membrane</keyword>
<keyword id="KW-1015">Disulfide bond</keyword>
<keyword id="KW-0325">Glycoprotein</keyword>
<keyword id="KW-0433">Leucine-rich repeat</keyword>
<keyword id="KW-0472">Membrane</keyword>
<keyword id="KW-0547">Nucleotide-binding</keyword>
<keyword id="KW-0675">Receptor</keyword>
<keyword id="KW-1185">Reference proteome</keyword>
<keyword id="KW-0677">Repeat</keyword>
<keyword id="KW-0732">Signal</keyword>
<keyword id="KW-0812">Transmembrane</keyword>
<keyword id="KW-1133">Transmembrane helix</keyword>
<reference key="1">
    <citation type="journal article" date="2005" name="Proc. Natl. Acad. Sci. U.S.A.">
        <title>STRUBBELIG defines a receptor kinase-mediated signaling pathway regulating organ development in Arabidopsis.</title>
        <authorList>
            <person name="Chevalier D."/>
            <person name="Batoux M."/>
            <person name="Fulton L."/>
            <person name="Pfister K."/>
            <person name="Yadav R.K."/>
            <person name="Schellenberg M."/>
            <person name="Schneitz K."/>
        </authorList>
    </citation>
    <scope>NUCLEOTIDE SEQUENCE [MRNA]</scope>
    <scope>MUTAGENESIS OF VAL-64; 288-GLN--ILE-768; 337-TRP--ILE-768; GLY-506; LYS-525; GLU-539 AND ARG-599</scope>
    <scope>LACK OF KINASE ACTIVITY</scope>
    <scope>TISSUE SPECIFICITY</scope>
    <source>
        <strain>cv. Landsberg erecta</strain>
    </source>
</reference>
<reference key="2">
    <citation type="journal article" date="2000" name="Nature">
        <title>Sequence and analysis of chromosome 1 of the plant Arabidopsis thaliana.</title>
        <authorList>
            <person name="Theologis A."/>
            <person name="Ecker J.R."/>
            <person name="Palm C.J."/>
            <person name="Federspiel N.A."/>
            <person name="Kaul S."/>
            <person name="White O."/>
            <person name="Alonso J."/>
            <person name="Altafi H."/>
            <person name="Araujo R."/>
            <person name="Bowman C.L."/>
            <person name="Brooks S.Y."/>
            <person name="Buehler E."/>
            <person name="Chan A."/>
            <person name="Chao Q."/>
            <person name="Chen H."/>
            <person name="Cheuk R.F."/>
            <person name="Chin C.W."/>
            <person name="Chung M.K."/>
            <person name="Conn L."/>
            <person name="Conway A.B."/>
            <person name="Conway A.R."/>
            <person name="Creasy T.H."/>
            <person name="Dewar K."/>
            <person name="Dunn P."/>
            <person name="Etgu P."/>
            <person name="Feldblyum T.V."/>
            <person name="Feng J.-D."/>
            <person name="Fong B."/>
            <person name="Fujii C.Y."/>
            <person name="Gill J.E."/>
            <person name="Goldsmith A.D."/>
            <person name="Haas B."/>
            <person name="Hansen N.F."/>
            <person name="Hughes B."/>
            <person name="Huizar L."/>
            <person name="Hunter J.L."/>
            <person name="Jenkins J."/>
            <person name="Johnson-Hopson C."/>
            <person name="Khan S."/>
            <person name="Khaykin E."/>
            <person name="Kim C.J."/>
            <person name="Koo H.L."/>
            <person name="Kremenetskaia I."/>
            <person name="Kurtz D.B."/>
            <person name="Kwan A."/>
            <person name="Lam B."/>
            <person name="Langin-Hooper S."/>
            <person name="Lee A."/>
            <person name="Lee J.M."/>
            <person name="Lenz C.A."/>
            <person name="Li J.H."/>
            <person name="Li Y.-P."/>
            <person name="Lin X."/>
            <person name="Liu S.X."/>
            <person name="Liu Z.A."/>
            <person name="Luros J.S."/>
            <person name="Maiti R."/>
            <person name="Marziali A."/>
            <person name="Militscher J."/>
            <person name="Miranda M."/>
            <person name="Nguyen M."/>
            <person name="Nierman W.C."/>
            <person name="Osborne B.I."/>
            <person name="Pai G."/>
            <person name="Peterson J."/>
            <person name="Pham P.K."/>
            <person name="Rizzo M."/>
            <person name="Rooney T."/>
            <person name="Rowley D."/>
            <person name="Sakano H."/>
            <person name="Salzberg S.L."/>
            <person name="Schwartz J.R."/>
            <person name="Shinn P."/>
            <person name="Southwick A.M."/>
            <person name="Sun H."/>
            <person name="Tallon L.J."/>
            <person name="Tambunga G."/>
            <person name="Toriumi M.J."/>
            <person name="Town C.D."/>
            <person name="Utterback T."/>
            <person name="Van Aken S."/>
            <person name="Vaysberg M."/>
            <person name="Vysotskaia V.S."/>
            <person name="Walker M."/>
            <person name="Wu D."/>
            <person name="Yu G."/>
            <person name="Fraser C.M."/>
            <person name="Venter J.C."/>
            <person name="Davis R.W."/>
        </authorList>
    </citation>
    <scope>NUCLEOTIDE SEQUENCE [LARGE SCALE GENOMIC DNA]</scope>
    <source>
        <strain>cv. Columbia</strain>
    </source>
</reference>
<reference key="3">
    <citation type="journal article" date="2017" name="Plant J.">
        <title>Araport11: a complete reannotation of the Arabidopsis thaliana reference genome.</title>
        <authorList>
            <person name="Cheng C.Y."/>
            <person name="Krishnakumar V."/>
            <person name="Chan A.P."/>
            <person name="Thibaud-Nissen F."/>
            <person name="Schobel S."/>
            <person name="Town C.D."/>
        </authorList>
    </citation>
    <scope>GENOME REANNOTATION</scope>
    <source>
        <strain>cv. Columbia</strain>
    </source>
</reference>
<reference key="4">
    <citation type="journal article" date="2003" name="Science">
        <title>Empirical analysis of transcriptional activity in the Arabidopsis genome.</title>
        <authorList>
            <person name="Yamada K."/>
            <person name="Lim J."/>
            <person name="Dale J.M."/>
            <person name="Chen H."/>
            <person name="Shinn P."/>
            <person name="Palm C.J."/>
            <person name="Southwick A.M."/>
            <person name="Wu H.C."/>
            <person name="Kim C.J."/>
            <person name="Nguyen M."/>
            <person name="Pham P.K."/>
            <person name="Cheuk R.F."/>
            <person name="Karlin-Newmann G."/>
            <person name="Liu S.X."/>
            <person name="Lam B."/>
            <person name="Sakano H."/>
            <person name="Wu T."/>
            <person name="Yu G."/>
            <person name="Miranda M."/>
            <person name="Quach H.L."/>
            <person name="Tripp M."/>
            <person name="Chang C.H."/>
            <person name="Lee J.M."/>
            <person name="Toriumi M.J."/>
            <person name="Chan M.M."/>
            <person name="Tang C.C."/>
            <person name="Onodera C.S."/>
            <person name="Deng J.M."/>
            <person name="Akiyama K."/>
            <person name="Ansari Y."/>
            <person name="Arakawa T."/>
            <person name="Banh J."/>
            <person name="Banno F."/>
            <person name="Bowser L."/>
            <person name="Brooks S.Y."/>
            <person name="Carninci P."/>
            <person name="Chao Q."/>
            <person name="Choy N."/>
            <person name="Enju A."/>
            <person name="Goldsmith A.D."/>
            <person name="Gurjal M."/>
            <person name="Hansen N.F."/>
            <person name="Hayashizaki Y."/>
            <person name="Johnson-Hopson C."/>
            <person name="Hsuan V.W."/>
            <person name="Iida K."/>
            <person name="Karnes M."/>
            <person name="Khan S."/>
            <person name="Koesema E."/>
            <person name="Ishida J."/>
            <person name="Jiang P.X."/>
            <person name="Jones T."/>
            <person name="Kawai J."/>
            <person name="Kamiya A."/>
            <person name="Meyers C."/>
            <person name="Nakajima M."/>
            <person name="Narusaka M."/>
            <person name="Seki M."/>
            <person name="Sakurai T."/>
            <person name="Satou M."/>
            <person name="Tamse R."/>
            <person name="Vaysberg M."/>
            <person name="Wallender E.K."/>
            <person name="Wong C."/>
            <person name="Yamamura Y."/>
            <person name="Yuan S."/>
            <person name="Shinozaki K."/>
            <person name="Davis R.W."/>
            <person name="Theologis A."/>
            <person name="Ecker J.R."/>
        </authorList>
    </citation>
    <scope>NUCLEOTIDE SEQUENCE [LARGE SCALE MRNA]</scope>
    <source>
        <strain>cv. Columbia</strain>
    </source>
</reference>
<reference key="5">
    <citation type="submission" date="2006-07" db="EMBL/GenBank/DDBJ databases">
        <title>Large-scale analysis of RIKEN Arabidopsis full-length (RAFL) cDNAs.</title>
        <authorList>
            <person name="Totoki Y."/>
            <person name="Seki M."/>
            <person name="Ishida J."/>
            <person name="Nakajima M."/>
            <person name="Enju A."/>
            <person name="Kamiya A."/>
            <person name="Narusaka M."/>
            <person name="Shin-i T."/>
            <person name="Nakagawa M."/>
            <person name="Sakamoto N."/>
            <person name="Oishi K."/>
            <person name="Kohara Y."/>
            <person name="Kobayashi M."/>
            <person name="Toyoda A."/>
            <person name="Sakaki Y."/>
            <person name="Sakurai T."/>
            <person name="Iida K."/>
            <person name="Akiyama K."/>
            <person name="Satou M."/>
            <person name="Toyoda T."/>
            <person name="Konagaya A."/>
            <person name="Carninci P."/>
            <person name="Kawai J."/>
            <person name="Hayashizaki Y."/>
            <person name="Shinozaki K."/>
        </authorList>
    </citation>
    <scope>NUCLEOTIDE SEQUENCE [LARGE SCALE MRNA]</scope>
    <source>
        <strain>cv. Columbia</strain>
    </source>
</reference>
<reference key="6">
    <citation type="journal article" date="2005" name="Science">
        <title>Positional signaling mediated by a receptor-like kinase in Arabidopsis.</title>
        <authorList>
            <person name="Kwak S.-H."/>
            <person name="Shen R."/>
            <person name="Schiefelbein J."/>
        </authorList>
    </citation>
    <scope>FUNCTION</scope>
    <scope>MUTAGENESIS OF 324-GLN--ILE-768</scope>
    <scope>TISSUE SPECIFICITY</scope>
    <source>
        <strain>cv. Wassilewskija</strain>
    </source>
</reference>
<reference key="7">
    <citation type="journal article" date="2006" name="J. Exp. Bot.">
        <title>Positional information and mobile transcriptional regulators determine cell pattern in the Arabidopsis root epidermis.</title>
        <authorList>
            <person name="Dolan L."/>
        </authorList>
    </citation>
    <scope>FUNCTION</scope>
</reference>
<reference key="8">
    <citation type="journal article" date="2007" name="Dev. Biol.">
        <title>The role of the SCRAMBLED receptor-like kinase in patterning the Arabidopsis root epidermis.</title>
        <authorList>
            <person name="Kwak S.-H."/>
            <person name="Schiefelbein J."/>
        </authorList>
    </citation>
    <scope>FUNCTION</scope>
    <scope>DEVELOPMENTAL STAGE</scope>
</reference>
<reference key="9">
    <citation type="journal article" date="2007" name="BMC Plant Biol.">
        <title>Molecular characterisation of the STRUBBELIG-RECEPTOR FAMILY of genes encoding putative leucine-rich repeat receptor-like kinases in Arabidopsis thaliana.</title>
        <authorList>
            <person name="Eyueboglu B."/>
            <person name="Pfister K."/>
            <person name="Haberer G."/>
            <person name="Chevalier D."/>
            <person name="Fuchs A."/>
            <person name="Mayer K.F.X."/>
            <person name="Schneitz K."/>
        </authorList>
    </citation>
    <scope>LACK OF COMPLEMENTATION</scope>
    <source>
        <strain>cv. Columbia</strain>
    </source>
</reference>
<reference key="10">
    <citation type="journal article" date="2008" name="Dev. Biol.">
        <title>The Arabidopsis receptor-like kinase STRUBBELIG mediates inter-cell-layer signaling during floral development.</title>
        <authorList>
            <person name="Yadav R.K."/>
            <person name="Fulton L."/>
            <person name="Batoux M."/>
            <person name="Schneitz K."/>
        </authorList>
    </citation>
    <scope>FUNCTION</scope>
    <scope>ACTIVITY REGULATION</scope>
    <scope>SUBCELLULAR LOCATION</scope>
</reference>
<reference key="11">
    <citation type="journal article" date="2011" name="PLoS ONE">
        <title>Structure-function analysis of STRUBBELIG, an Arabidopsis atypical receptor-like kinase involved in tissue morphogenesis.</title>
        <authorList>
            <person name="Vaddepalli P."/>
            <person name="Fulton L."/>
            <person name="Batoux M."/>
            <person name="Yadav R.K."/>
            <person name="Schneitz K."/>
        </authorList>
    </citation>
    <scope>FUNCTION</scope>
    <scope>3D-STRUCTURE MODELING</scope>
    <scope>MUTAGENESIS OF CYS-57; VAL-64; CYS-66; SER-69; SER-222; PRO-258; PRO-272; PRO-304; GLY-357; SER-466; PRO-473; SER-545; ARG-599 AND LEU-633</scope>
    <scope>DISULFIDE BOND</scope>
</reference>
<reference key="12">
    <citation type="journal article" date="2013" name="BMC Plant Biol.">
        <title>ANGUSTIFOLIA is a central component of tissue morphogenesis mediated by the atypical receptor-like kinase STRUBBELIG.</title>
        <authorList>
            <person name="Bai Y."/>
            <person name="Vaddepalli P."/>
            <person name="Fulton L."/>
            <person name="Bhasin H."/>
            <person name="Hulskamp M."/>
            <person name="Schneitz K."/>
        </authorList>
    </citation>
    <scope>INTERACTION WITH AN</scope>
</reference>
<reference key="13">
    <citation type="journal article" date="2013" name="Development">
        <title>QUIRKY interacts with STRUBBELIG and PAL OF QUIRKY to regulate cell growth anisotropy during Arabidopsis gynoecium development.</title>
        <authorList>
            <person name="Trehin C."/>
            <person name="Schrempp S."/>
            <person name="Chauvet A."/>
            <person name="Berne-Dedieu A."/>
            <person name="Thierry A.-M."/>
            <person name="Faure J.-E."/>
            <person name="Negrutiu I."/>
            <person name="Morel P."/>
        </authorList>
    </citation>
    <scope>FUNCTION</scope>
    <scope>DISRUPTION PHENOTYPE</scope>
    <scope>INTERACTION WITH QKY AND POQ</scope>
    <source>
        <strain>cv. C24</strain>
        <strain>cv. Columbia</strain>
    </source>
</reference>
<reference key="14">
    <citation type="journal article" date="2014" name="Development">
        <title>The C2-domain protein QUIRKY and the receptor-like kinase STRUBBELIG localize to plasmodesmata and mediate tissue morphogenesis in Arabidopsis thaliana.</title>
        <authorList>
            <person name="Vaddepalli P."/>
            <person name="Herrmann A."/>
            <person name="Fulton L."/>
            <person name="Oelschner M."/>
            <person name="Hillmer S."/>
            <person name="Stratil T.F."/>
            <person name="Fastner A."/>
            <person name="Hammes U.Z."/>
            <person name="Ott T."/>
            <person name="Robinson D.G."/>
            <person name="Schneitz K."/>
        </authorList>
    </citation>
    <scope>FUNCTION</scope>
    <scope>SUBCELLULAR LOCATION</scope>
    <scope>INTERACTION WITH QKY</scope>
    <source>
        <strain>cv. Columbia</strain>
        <strain>cv. Landsberg erecta</strain>
    </source>
</reference>
<name>SUB_ARATH</name>
<proteinExistence type="evidence at protein level"/>
<evidence type="ECO:0000255" key="1"/>
<evidence type="ECO:0000255" key="2">
    <source>
        <dbReference type="PROSITE-ProRule" id="PRU00159"/>
    </source>
</evidence>
<evidence type="ECO:0000256" key="3">
    <source>
        <dbReference type="SAM" id="MobiDB-lite"/>
    </source>
</evidence>
<evidence type="ECO:0000269" key="4">
    <source>
    </source>
</evidence>
<evidence type="ECO:0000269" key="5">
    <source>
    </source>
</evidence>
<evidence type="ECO:0000269" key="6">
    <source>
    </source>
</evidence>
<evidence type="ECO:0000269" key="7">
    <source>
    </source>
</evidence>
<evidence type="ECO:0000269" key="8">
    <source>
    </source>
</evidence>
<evidence type="ECO:0000269" key="9">
    <source>
    </source>
</evidence>
<evidence type="ECO:0000269" key="10">
    <source>
    </source>
</evidence>
<evidence type="ECO:0000269" key="11">
    <source>
    </source>
</evidence>
<evidence type="ECO:0000269" key="12">
    <source>
    </source>
</evidence>
<evidence type="ECO:0000303" key="13">
    <source>
    </source>
</evidence>
<evidence type="ECO:0000303" key="14">
    <source>
    </source>
</evidence>
<evidence type="ECO:0000305" key="15"/>
<evidence type="ECO:0000305" key="16">
    <source>
    </source>
</evidence>
<evidence type="ECO:0000312" key="17">
    <source>
        <dbReference type="Araport" id="AT1G11130"/>
    </source>
</evidence>
<evidence type="ECO:0000312" key="18">
    <source>
        <dbReference type="EMBL" id="AAB65472.1"/>
    </source>
</evidence>
<evidence type="ECO:0000312" key="19">
    <source>
        <dbReference type="EMBL" id="AAD50000.1"/>
    </source>
</evidence>
<organism>
    <name type="scientific">Arabidopsis thaliana</name>
    <name type="common">Mouse-ear cress</name>
    <dbReference type="NCBI Taxonomy" id="3702"/>
    <lineage>
        <taxon>Eukaryota</taxon>
        <taxon>Viridiplantae</taxon>
        <taxon>Streptophyta</taxon>
        <taxon>Embryophyta</taxon>
        <taxon>Tracheophyta</taxon>
        <taxon>Spermatophyta</taxon>
        <taxon>Magnoliopsida</taxon>
        <taxon>eudicotyledons</taxon>
        <taxon>Gunneridae</taxon>
        <taxon>Pentapetalae</taxon>
        <taxon>rosids</taxon>
        <taxon>malvids</taxon>
        <taxon>Brassicales</taxon>
        <taxon>Brassicaceae</taxon>
        <taxon>Camelineae</taxon>
        <taxon>Arabidopsis</taxon>
    </lineage>
</organism>
<accession>Q8RWZ1</accession>
<accession>O04081</accession>
<accession>Q9SXA2</accession>
<protein>
    <recommendedName>
        <fullName evidence="13">Protein STRUBBELIG</fullName>
    </recommendedName>
    <alternativeName>
        <fullName evidence="15">Leucine-rich repeat receptor kinase-like protein SUB</fullName>
    </alternativeName>
    <alternativeName>
        <fullName evidence="14">Protein SCRAMBLED</fullName>
    </alternativeName>
</protein>